<comment type="function">
    <text evidence="2">Receptor that mediates peroxisomal import of proteins containing a C-terminal PTS1-type tripeptide peroxisomal targeting signal (SKL-type). Binds to cargo proteins containing a PTS1 peroxisomal targeting signal in the cytosol, and translocates them into the peroxisome matrix by passing through the PEX13-PEX14 docking complex along with cargo proteins. PEX5 receptor is then retrotranslocated into the cytosol, leading to release of bound cargo in the peroxisome matrix, and reset for a subsequent peroxisome import cycle.</text>
</comment>
<comment type="subunit">
    <text evidence="2">Interacts (via WxxxF/Y and LVxEF motifs) with PEX14; promoting translocation through the PEX13-PEX14 docking complex.</text>
</comment>
<comment type="subcellular location">
    <subcellularLocation>
        <location evidence="2">Cytoplasm</location>
        <location evidence="2">Cytosol</location>
    </subcellularLocation>
    <subcellularLocation>
        <location evidence="2">Peroxisome matrix</location>
    </subcellularLocation>
    <text evidence="2 3">Cycles between the cytosol and the peroxisome matrix. Following binding to cargo proteins containing a PTS1 peroxisomal targeting signal in the cytosol, recruited to the docking complex, composed of PEX13 and PEX14, leading to translocation into the peroxisome matrix along with cargo proteins. Export and recycling to the cytosol is initiated by binding to the PEX2-PEX10-PEX12 ligase complex via its unstructured N-terminus that inserts into the ligase pore and emerges in the cytosol. Cys-6 of PEX5 is then monoubiquitinated, promoting its extraction from peroxisomal membrane by the PEX1-PEX6 AAA ATPase complex (By similarity). Extraction is accompanied by unfolding of the TPR repeats and release of bound cargo in the peroxisome matrix (By similarity). The TPR repeats refold in the cytosol and ubiquitination is removed by deubiquitinating enzyme UBP15, resetting PEX5 for a subsequent import cycle (By similarity).</text>
</comment>
<comment type="domain">
    <text evidence="1">The TPR repeats mediate interaction with proteins containing a C-terminal PTS1-type tripeptide peroxisomal targeting signal (SKL-type).</text>
</comment>
<comment type="domain">
    <text evidence="1">The WxxxF/Y motifs mediate interaction with PEX14, promoting association with the PEX13-PEX14 docking complex.</text>
</comment>
<comment type="domain">
    <text evidence="1">The amphipathic helix 1 and 2 (AH1 and AH2, respectively) are required for PEX5 retrotranslocation and recycling. AH2 mediates interaction with lumenal side of the PEX2-PEX10-PEX12 ligase complex, while AH1 is required for extraction from peroxisomal membrane by the PEX1-PEX6 AAA ATPase complex.</text>
</comment>
<comment type="PTM">
    <text evidence="2">Monoubiquitinated at Cys-6 by PEX2 during PEX5 passage through the retrotranslocation channel: monoubiquitination acts as a signal for PEX5 extraction and is required for proper export from peroxisomes and recycling. When PEX5 recycling is compromised, polyubiquitinated at Lys-18 by PEX10 during its passage through the retrotranslocation channel, leading to its degradation.</text>
</comment>
<comment type="similarity">
    <text evidence="5">Belongs to the peroxisomal targeting signal receptor family.</text>
</comment>
<protein>
    <recommendedName>
        <fullName>Peroxisomal targeting signal receptor</fullName>
        <shortName>PTS1 receptor</shortName>
        <shortName>PTS1R</shortName>
    </recommendedName>
    <alternativeName>
        <fullName>Peroxin-5</fullName>
    </alternativeName>
</protein>
<accession>Q6FM42</accession>
<name>PEX5_CANGA</name>
<evidence type="ECO:0000250" key="1">
    <source>
        <dbReference type="UniProtKB" id="A0A1L8FDW4"/>
    </source>
</evidence>
<evidence type="ECO:0000250" key="2">
    <source>
        <dbReference type="UniProtKB" id="P35056"/>
    </source>
</evidence>
<evidence type="ECO:0000250" key="3">
    <source>
        <dbReference type="UniProtKB" id="P50542"/>
    </source>
</evidence>
<evidence type="ECO:0000256" key="4">
    <source>
        <dbReference type="SAM" id="MobiDB-lite"/>
    </source>
</evidence>
<evidence type="ECO:0000305" key="5"/>
<keyword id="KW-0963">Cytoplasm</keyword>
<keyword id="KW-1017">Isopeptide bond</keyword>
<keyword id="KW-0576">Peroxisome</keyword>
<keyword id="KW-0653">Protein transport</keyword>
<keyword id="KW-1185">Reference proteome</keyword>
<keyword id="KW-0677">Repeat</keyword>
<keyword id="KW-0882">Thioester bond</keyword>
<keyword id="KW-0802">TPR repeat</keyword>
<keyword id="KW-0811">Translocation</keyword>
<keyword id="KW-0813">Transport</keyword>
<keyword id="KW-0832">Ubl conjugation</keyword>
<proteinExistence type="inferred from homology"/>
<organism>
    <name type="scientific">Candida glabrata (strain ATCC 2001 / BCRC 20586 / JCM 3761 / NBRC 0622 / NRRL Y-65 / CBS 138)</name>
    <name type="common">Yeast</name>
    <name type="synonym">Nakaseomyces glabratus</name>
    <dbReference type="NCBI Taxonomy" id="284593"/>
    <lineage>
        <taxon>Eukaryota</taxon>
        <taxon>Fungi</taxon>
        <taxon>Dikarya</taxon>
        <taxon>Ascomycota</taxon>
        <taxon>Saccharomycotina</taxon>
        <taxon>Saccharomycetes</taxon>
        <taxon>Saccharomycetales</taxon>
        <taxon>Saccharomycetaceae</taxon>
        <taxon>Nakaseomyces</taxon>
    </lineage>
</organism>
<dbReference type="EMBL" id="CR380957">
    <property type="protein sequence ID" value="CAG61665.1"/>
    <property type="molecule type" value="Genomic_DNA"/>
</dbReference>
<dbReference type="RefSeq" id="XP_448702.1">
    <property type="nucleotide sequence ID" value="XM_448702.1"/>
</dbReference>
<dbReference type="SMR" id="Q6FM42"/>
<dbReference type="FunCoup" id="Q6FM42">
    <property type="interactions" value="121"/>
</dbReference>
<dbReference type="STRING" id="284593.Q6FM42"/>
<dbReference type="EnsemblFungi" id="CAGL0K11209g-T">
    <property type="protein sequence ID" value="CAGL0K11209g-T-p1"/>
    <property type="gene ID" value="CAGL0K11209g"/>
</dbReference>
<dbReference type="GeneID" id="2890061"/>
<dbReference type="KEGG" id="cgr:2890061"/>
<dbReference type="CGD" id="CAL0134877">
    <property type="gene designation" value="PEX5"/>
</dbReference>
<dbReference type="VEuPathDB" id="FungiDB:CAGL0K11209g"/>
<dbReference type="eggNOG" id="KOG1125">
    <property type="taxonomic scope" value="Eukaryota"/>
</dbReference>
<dbReference type="HOGENOM" id="CLU_013516_3_0_1"/>
<dbReference type="InParanoid" id="Q6FM42"/>
<dbReference type="OMA" id="MANSNAW"/>
<dbReference type="Proteomes" id="UP000002428">
    <property type="component" value="Chromosome K"/>
</dbReference>
<dbReference type="GO" id="GO:0005829">
    <property type="term" value="C:cytosol"/>
    <property type="evidence" value="ECO:0000266"/>
    <property type="project" value="CGD"/>
</dbReference>
<dbReference type="GO" id="GO:1990429">
    <property type="term" value="C:peroxisomal importomer complex"/>
    <property type="evidence" value="ECO:0007669"/>
    <property type="project" value="EnsemblFungi"/>
</dbReference>
<dbReference type="GO" id="GO:0005782">
    <property type="term" value="C:peroxisomal matrix"/>
    <property type="evidence" value="ECO:0007669"/>
    <property type="project" value="UniProtKB-SubCell"/>
</dbReference>
<dbReference type="GO" id="GO:0005778">
    <property type="term" value="C:peroxisomal membrane"/>
    <property type="evidence" value="ECO:0000266"/>
    <property type="project" value="CGD"/>
</dbReference>
<dbReference type="GO" id="GO:0005777">
    <property type="term" value="C:peroxisome"/>
    <property type="evidence" value="ECO:0000266"/>
    <property type="project" value="CGD"/>
</dbReference>
<dbReference type="GO" id="GO:0005052">
    <property type="term" value="F:peroxisome matrix targeting signal-1 binding"/>
    <property type="evidence" value="ECO:0000266"/>
    <property type="project" value="CGD"/>
</dbReference>
<dbReference type="GO" id="GO:0140597">
    <property type="term" value="F:protein carrier chaperone"/>
    <property type="evidence" value="ECO:0007669"/>
    <property type="project" value="EnsemblFungi"/>
</dbReference>
<dbReference type="GO" id="GO:0030674">
    <property type="term" value="F:protein-macromolecule adaptor activity"/>
    <property type="evidence" value="ECO:0007669"/>
    <property type="project" value="EnsemblFungi"/>
</dbReference>
<dbReference type="GO" id="GO:0016560">
    <property type="term" value="P:protein import into peroxisome matrix, docking"/>
    <property type="evidence" value="ECO:0000266"/>
    <property type="project" value="CGD"/>
</dbReference>
<dbReference type="FunFam" id="1.25.40.10:FF:000218">
    <property type="entry name" value="Peroxisomal targeting signal receptor"/>
    <property type="match status" value="1"/>
</dbReference>
<dbReference type="Gene3D" id="1.25.40.10">
    <property type="entry name" value="Tetratricopeptide repeat domain"/>
    <property type="match status" value="1"/>
</dbReference>
<dbReference type="InterPro" id="IPR024111">
    <property type="entry name" value="PEX5/PEX5L"/>
</dbReference>
<dbReference type="InterPro" id="IPR011990">
    <property type="entry name" value="TPR-like_helical_dom_sf"/>
</dbReference>
<dbReference type="InterPro" id="IPR019734">
    <property type="entry name" value="TPR_rpt"/>
</dbReference>
<dbReference type="PANTHER" id="PTHR10130:SF0">
    <property type="entry name" value="GH08708P"/>
    <property type="match status" value="1"/>
</dbReference>
<dbReference type="PANTHER" id="PTHR10130">
    <property type="entry name" value="PEROXISOMAL TARGETING SIGNAL 1 RECEPTOR PEX5"/>
    <property type="match status" value="1"/>
</dbReference>
<dbReference type="Pfam" id="PF13432">
    <property type="entry name" value="TPR_16"/>
    <property type="match status" value="2"/>
</dbReference>
<dbReference type="SMART" id="SM00028">
    <property type="entry name" value="TPR"/>
    <property type="match status" value="4"/>
</dbReference>
<dbReference type="SUPFAM" id="SSF48452">
    <property type="entry name" value="TPR-like"/>
    <property type="match status" value="1"/>
</dbReference>
<dbReference type="PROSITE" id="PS50005">
    <property type="entry name" value="TPR"/>
    <property type="match status" value="5"/>
</dbReference>
<dbReference type="PROSITE" id="PS50293">
    <property type="entry name" value="TPR_REGION"/>
    <property type="match status" value="1"/>
</dbReference>
<feature type="chain" id="PRO_0000106309" description="Peroxisomal targeting signal receptor">
    <location>
        <begin position="1"/>
        <end position="590"/>
    </location>
</feature>
<feature type="repeat" description="TPR 1">
    <location>
        <begin position="285"/>
        <end position="319"/>
    </location>
</feature>
<feature type="repeat" description="TPR 2">
    <location>
        <begin position="320"/>
        <end position="353"/>
    </location>
</feature>
<feature type="repeat" description="TPR 3">
    <location>
        <begin position="424"/>
        <end position="457"/>
    </location>
</feature>
<feature type="repeat" description="TPR 4">
    <location>
        <begin position="459"/>
        <end position="491"/>
    </location>
</feature>
<feature type="repeat" description="TPR 5">
    <location>
        <begin position="493"/>
        <end position="525"/>
    </location>
</feature>
<feature type="region of interest" description="Amphipathic helix 1 (AH1)" evidence="1">
    <location>
        <begin position="7"/>
        <end position="29"/>
    </location>
</feature>
<feature type="region of interest" description="Disordered" evidence="4">
    <location>
        <begin position="18"/>
        <end position="45"/>
    </location>
</feature>
<feature type="region of interest" description="Amphipathic helix 2 (AH2)" evidence="1">
    <location>
        <begin position="56"/>
        <end position="74"/>
    </location>
</feature>
<feature type="region of interest" description="Amphipathic helix 4 (AH4)" evidence="1">
    <location>
        <begin position="227"/>
        <end position="243"/>
    </location>
</feature>
<feature type="short sequence motif" description="WxxxF/Y motif 1" evidence="1">
    <location>
        <begin position="108"/>
        <end position="112"/>
    </location>
</feature>
<feature type="short sequence motif" description="WxxxF/Y motif 2" evidence="1">
    <location>
        <begin position="139"/>
        <end position="143"/>
    </location>
</feature>
<feature type="short sequence motif" description="WxxxF/Y motif 3" evidence="1">
    <location>
        <begin position="178"/>
        <end position="182"/>
    </location>
</feature>
<feature type="compositionally biased region" description="Polar residues" evidence="4">
    <location>
        <begin position="18"/>
        <end position="30"/>
    </location>
</feature>
<feature type="cross-link" description="Glycyl cysteine thioester (Cys-Gly) (interchain with G-Cter in ubiquitin)" evidence="2">
    <location>
        <position position="6"/>
    </location>
</feature>
<feature type="cross-link" description="Glycyl lysine isopeptide (Lys-Gly) (interchain with G-Cter in ubiquitin)" evidence="2">
    <location>
        <position position="18"/>
    </location>
</feature>
<gene>
    <name type="primary">PEX5</name>
    <name type="ordered locus">CAGL0K11209g</name>
</gene>
<reference key="1">
    <citation type="journal article" date="2004" name="Nature">
        <title>Genome evolution in yeasts.</title>
        <authorList>
            <person name="Dujon B."/>
            <person name="Sherman D."/>
            <person name="Fischer G."/>
            <person name="Durrens P."/>
            <person name="Casaregola S."/>
            <person name="Lafontaine I."/>
            <person name="de Montigny J."/>
            <person name="Marck C."/>
            <person name="Neuveglise C."/>
            <person name="Talla E."/>
            <person name="Goffard N."/>
            <person name="Frangeul L."/>
            <person name="Aigle M."/>
            <person name="Anthouard V."/>
            <person name="Babour A."/>
            <person name="Barbe V."/>
            <person name="Barnay S."/>
            <person name="Blanchin S."/>
            <person name="Beckerich J.-M."/>
            <person name="Beyne E."/>
            <person name="Bleykasten C."/>
            <person name="Boisrame A."/>
            <person name="Boyer J."/>
            <person name="Cattolico L."/>
            <person name="Confanioleri F."/>
            <person name="de Daruvar A."/>
            <person name="Despons L."/>
            <person name="Fabre E."/>
            <person name="Fairhead C."/>
            <person name="Ferry-Dumazet H."/>
            <person name="Groppi A."/>
            <person name="Hantraye F."/>
            <person name="Hennequin C."/>
            <person name="Jauniaux N."/>
            <person name="Joyet P."/>
            <person name="Kachouri R."/>
            <person name="Kerrest A."/>
            <person name="Koszul R."/>
            <person name="Lemaire M."/>
            <person name="Lesur I."/>
            <person name="Ma L."/>
            <person name="Muller H."/>
            <person name="Nicaud J.-M."/>
            <person name="Nikolski M."/>
            <person name="Oztas S."/>
            <person name="Ozier-Kalogeropoulos O."/>
            <person name="Pellenz S."/>
            <person name="Potier S."/>
            <person name="Richard G.-F."/>
            <person name="Straub M.-L."/>
            <person name="Suleau A."/>
            <person name="Swennen D."/>
            <person name="Tekaia F."/>
            <person name="Wesolowski-Louvel M."/>
            <person name="Westhof E."/>
            <person name="Wirth B."/>
            <person name="Zeniou-Meyer M."/>
            <person name="Zivanovic Y."/>
            <person name="Bolotin-Fukuhara M."/>
            <person name="Thierry A."/>
            <person name="Bouchier C."/>
            <person name="Caudron B."/>
            <person name="Scarpelli C."/>
            <person name="Gaillardin C."/>
            <person name="Weissenbach J."/>
            <person name="Wincker P."/>
            <person name="Souciet J.-L."/>
        </authorList>
    </citation>
    <scope>NUCLEOTIDE SEQUENCE [LARGE SCALE GENOMIC DNA]</scope>
    <source>
        <strain>ATCC 2001 / BCRC 20586 / JCM 3761 / NBRC 0622 / NRRL Y-65 / CBS 138</strain>
    </source>
</reference>
<sequence>MNMTDCSVGSNPLAQLNKHAQGQGSSLSNTHVRHSGGVSGSNVFRSGQNVVSEDGRQQLNSFMSQPMRLGEDKMHPATPMGSSMGNAIGGSMMQVDDSSMRSAGDSQWTREFRQNTAGKTNMAQEMGSSGAAMANSNAWKFRYSPMTNVNNTAPLRPFNNIIRQKERANGLETGDIAWNDKFDELEKEVSDKLNFKDGETVEKMDTGAEMQQDNLETGDSTDYQKEFQEVWDSIQQDTEEMLSYKDDYEDMLNDTDFERSFLGKRAVESLEYKFENPSENQYMNNPNAYQIGCILMENGAKLSEAALAFEAAIKQDPKHVDAWLKLGIVQIQNEKELNGMSALETCLKLDPNNLEAMKNLAISYINEGYDMSAYNMLNRWADTKYPGFYNSAELEGKRDEHENIHSKMTRRFLSLVNRINSVDPDIQLCLGLLFYANDEFDRTIDCFQAALKVNPNDELMWNRLGASLANSNRSEEAIQAYHRALQLKPSFVRARYNLAVSSMNIGCYKEAAEHLLTALSMHDVEGEFEVQSTRSNSISSADKYSFSGFKPTDNLLETLKRVFISMGRDDLLDRVRPGMDLSQFRNEFTF</sequence>